<sequence>MIEILHEYWKPLLWTDGYRFTGVAITLWLLILSVVIGGVLALFLAIGRVSSNKYIQFPIWLFTYIFRGTPLYVQLLVFYSGMYTLEIVKGTEFLNAFFRSGLNCTVLALTLNTCAYTTEIFAGAIRSVPHGEIEAARAYGFSTFKMYRCIILPSALRIALPAYSNEVILMLHSTALAFTATVPDLLKIARDINAATYQPFTAFGIAAVLYLIISYVLISLFRRAEKRWLQHVKPSSTH</sequence>
<protein>
    <recommendedName>
        <fullName evidence="1">Histidine/lysine/arginine/ornithine transport system permease protein HisM</fullName>
    </recommendedName>
</protein>
<evidence type="ECO:0000250" key="1">
    <source>
        <dbReference type="UniProtKB" id="P0A2I7"/>
    </source>
</evidence>
<evidence type="ECO:0000250" key="2">
    <source>
        <dbReference type="UniProtKB" id="P0AEU3"/>
    </source>
</evidence>
<evidence type="ECO:0000255" key="3"/>
<evidence type="ECO:0000255" key="4">
    <source>
        <dbReference type="PROSITE-ProRule" id="PRU00441"/>
    </source>
</evidence>
<evidence type="ECO:0000305" key="5"/>
<proteinExistence type="inferred from homology"/>
<name>HISM_SHIFL</name>
<gene>
    <name type="primary">hisM</name>
    <name type="ordered locus">SF2383</name>
    <name type="ordered locus">S2518</name>
</gene>
<feature type="chain" id="PRO_0000060049" description="Histidine/lysine/arginine/ornithine transport system permease protein HisM">
    <location>
        <begin position="1"/>
        <end position="238"/>
    </location>
</feature>
<feature type="topological domain" description="Periplasmic" evidence="5">
    <location>
        <begin position="1"/>
        <end position="26"/>
    </location>
</feature>
<feature type="transmembrane region" description="Helical" evidence="3">
    <location>
        <begin position="27"/>
        <end position="47"/>
    </location>
</feature>
<feature type="topological domain" description="Cytoplasmic" evidence="5">
    <location>
        <begin position="48"/>
        <end position="58"/>
    </location>
</feature>
<feature type="transmembrane region" description="Helical" evidence="3">
    <location>
        <begin position="59"/>
        <end position="79"/>
    </location>
</feature>
<feature type="topological domain" description="Periplasmic" evidence="5">
    <location>
        <begin position="80"/>
        <end position="104"/>
    </location>
</feature>
<feature type="transmembrane region" description="Helical" evidence="3">
    <location>
        <begin position="105"/>
        <end position="125"/>
    </location>
</feature>
<feature type="topological domain" description="Cytoplasmic" evidence="5">
    <location>
        <begin position="126"/>
        <end position="157"/>
    </location>
</feature>
<feature type="transmembrane region" description="Helical" evidence="3">
    <location>
        <begin position="158"/>
        <end position="178"/>
    </location>
</feature>
<feature type="topological domain" description="Periplasmic" evidence="5">
    <location>
        <begin position="179"/>
        <end position="199"/>
    </location>
</feature>
<feature type="transmembrane region" description="Helical" evidence="3">
    <location>
        <begin position="200"/>
        <end position="220"/>
    </location>
</feature>
<feature type="topological domain" description="Cytoplasmic" evidence="2">
    <location>
        <begin position="221"/>
        <end position="238"/>
    </location>
</feature>
<feature type="domain" description="ABC transmembrane type-1" evidence="4">
    <location>
        <begin position="23"/>
        <end position="221"/>
    </location>
</feature>
<dbReference type="EMBL" id="AE005674">
    <property type="protein sequence ID" value="AAN43896.1"/>
    <property type="molecule type" value="Genomic_DNA"/>
</dbReference>
<dbReference type="EMBL" id="AE014073">
    <property type="protein sequence ID" value="AAP17714.1"/>
    <property type="molecule type" value="Genomic_DNA"/>
</dbReference>
<dbReference type="RefSeq" id="NP_708189.1">
    <property type="nucleotide sequence ID" value="NC_004337.2"/>
</dbReference>
<dbReference type="RefSeq" id="WP_000569958.1">
    <property type="nucleotide sequence ID" value="NZ_WPGW01000016.1"/>
</dbReference>
<dbReference type="SMR" id="P0AEU6"/>
<dbReference type="STRING" id="198214.SF2383"/>
<dbReference type="PaxDb" id="198214-SF2383"/>
<dbReference type="GeneID" id="1025532"/>
<dbReference type="KEGG" id="sfl:SF2383"/>
<dbReference type="KEGG" id="sfx:S2518"/>
<dbReference type="PATRIC" id="fig|198214.7.peg.2850"/>
<dbReference type="HOGENOM" id="CLU_019602_1_4_6"/>
<dbReference type="Proteomes" id="UP000001006">
    <property type="component" value="Chromosome"/>
</dbReference>
<dbReference type="Proteomes" id="UP000002673">
    <property type="component" value="Chromosome"/>
</dbReference>
<dbReference type="GO" id="GO:0043190">
    <property type="term" value="C:ATP-binding cassette (ABC) transporter complex"/>
    <property type="evidence" value="ECO:0007669"/>
    <property type="project" value="InterPro"/>
</dbReference>
<dbReference type="GO" id="GO:0022857">
    <property type="term" value="F:transmembrane transporter activity"/>
    <property type="evidence" value="ECO:0007669"/>
    <property type="project" value="InterPro"/>
</dbReference>
<dbReference type="GO" id="GO:0006865">
    <property type="term" value="P:amino acid transport"/>
    <property type="evidence" value="ECO:0007669"/>
    <property type="project" value="UniProtKB-KW"/>
</dbReference>
<dbReference type="CDD" id="cd06261">
    <property type="entry name" value="TM_PBP2"/>
    <property type="match status" value="1"/>
</dbReference>
<dbReference type="FunFam" id="1.10.3720.10:FF:000012">
    <property type="entry name" value="Histidine ABC transporter permease HisM"/>
    <property type="match status" value="1"/>
</dbReference>
<dbReference type="Gene3D" id="1.10.3720.10">
    <property type="entry name" value="MetI-like"/>
    <property type="match status" value="1"/>
</dbReference>
<dbReference type="InterPro" id="IPR051322">
    <property type="entry name" value="AA_ABC_Transporter_Permease"/>
</dbReference>
<dbReference type="InterPro" id="IPR010065">
    <property type="entry name" value="AA_ABC_transptr_permease_3TM"/>
</dbReference>
<dbReference type="InterPro" id="IPR000515">
    <property type="entry name" value="MetI-like"/>
</dbReference>
<dbReference type="InterPro" id="IPR035906">
    <property type="entry name" value="MetI-like_sf"/>
</dbReference>
<dbReference type="NCBIfam" id="TIGR01726">
    <property type="entry name" value="HEQRo_perm_3TM"/>
    <property type="match status" value="1"/>
</dbReference>
<dbReference type="NCBIfam" id="NF011651">
    <property type="entry name" value="PRK15069.1"/>
    <property type="match status" value="1"/>
</dbReference>
<dbReference type="PANTHER" id="PTHR30450">
    <property type="entry name" value="ABC TRANSPORTER PERMEASE"/>
    <property type="match status" value="1"/>
</dbReference>
<dbReference type="PANTHER" id="PTHR30450:SF5">
    <property type="entry name" value="HISTIDINE TRANSPORT SYSTEM PERMEASE PROTEIN HISM"/>
    <property type="match status" value="1"/>
</dbReference>
<dbReference type="Pfam" id="PF00528">
    <property type="entry name" value="BPD_transp_1"/>
    <property type="match status" value="1"/>
</dbReference>
<dbReference type="SUPFAM" id="SSF161098">
    <property type="entry name" value="MetI-like"/>
    <property type="match status" value="1"/>
</dbReference>
<dbReference type="PROSITE" id="PS50928">
    <property type="entry name" value="ABC_TM1"/>
    <property type="match status" value="1"/>
</dbReference>
<organism>
    <name type="scientific">Shigella flexneri</name>
    <dbReference type="NCBI Taxonomy" id="623"/>
    <lineage>
        <taxon>Bacteria</taxon>
        <taxon>Pseudomonadati</taxon>
        <taxon>Pseudomonadota</taxon>
        <taxon>Gammaproteobacteria</taxon>
        <taxon>Enterobacterales</taxon>
        <taxon>Enterobacteriaceae</taxon>
        <taxon>Shigella</taxon>
    </lineage>
</organism>
<accession>P0AEU6</accession>
<accession>P20091</accession>
<accession>P76936</accession>
<comment type="function">
    <text evidence="1">Part of the ABC transporter complex HisPMQJ involved in histidine transport. Is also part of the ABC transporter complex HisPMQ-ArgT involved in lysine/arginine/ornithine transport. Probably responsible for the translocation of the substrate across the membrane.</text>
</comment>
<comment type="subunit">
    <text evidence="1">The HisPMQJ complex is composed of two ATP-binding proteins (HisP), two transmembrane proteins (HisM and HisQ) and a solute-binding protein (HisJ). The HisPMQ-ArgT complex is composed of two ATP-binding proteins (HisP), two transmembrane proteins (HisM and HisQ) and a solute-binding protein (ArgT).</text>
</comment>
<comment type="subcellular location">
    <subcellularLocation>
        <location evidence="1">Cell inner membrane</location>
        <topology evidence="1">Multi-pass membrane protein</topology>
    </subcellularLocation>
</comment>
<comment type="similarity">
    <text evidence="5">Belongs to the binding-protein-dependent transport system permease family. HisMQ subfamily.</text>
</comment>
<reference key="1">
    <citation type="journal article" date="2002" name="Nucleic Acids Res.">
        <title>Genome sequence of Shigella flexneri 2a: insights into pathogenicity through comparison with genomes of Escherichia coli K12 and O157.</title>
        <authorList>
            <person name="Jin Q."/>
            <person name="Yuan Z."/>
            <person name="Xu J."/>
            <person name="Wang Y."/>
            <person name="Shen Y."/>
            <person name="Lu W."/>
            <person name="Wang J."/>
            <person name="Liu H."/>
            <person name="Yang J."/>
            <person name="Yang F."/>
            <person name="Zhang X."/>
            <person name="Zhang J."/>
            <person name="Yang G."/>
            <person name="Wu H."/>
            <person name="Qu D."/>
            <person name="Dong J."/>
            <person name="Sun L."/>
            <person name="Xue Y."/>
            <person name="Zhao A."/>
            <person name="Gao Y."/>
            <person name="Zhu J."/>
            <person name="Kan B."/>
            <person name="Ding K."/>
            <person name="Chen S."/>
            <person name="Cheng H."/>
            <person name="Yao Z."/>
            <person name="He B."/>
            <person name="Chen R."/>
            <person name="Ma D."/>
            <person name="Qiang B."/>
            <person name="Wen Y."/>
            <person name="Hou Y."/>
            <person name="Yu J."/>
        </authorList>
    </citation>
    <scope>NUCLEOTIDE SEQUENCE [LARGE SCALE GENOMIC DNA]</scope>
    <source>
        <strain>301 / Serotype 2a</strain>
    </source>
</reference>
<reference key="2">
    <citation type="journal article" date="2003" name="Infect. Immun.">
        <title>Complete genome sequence and comparative genomics of Shigella flexneri serotype 2a strain 2457T.</title>
        <authorList>
            <person name="Wei J."/>
            <person name="Goldberg M.B."/>
            <person name="Burland V."/>
            <person name="Venkatesan M.M."/>
            <person name="Deng W."/>
            <person name="Fournier G."/>
            <person name="Mayhew G.F."/>
            <person name="Plunkett G. III"/>
            <person name="Rose D.J."/>
            <person name="Darling A."/>
            <person name="Mau B."/>
            <person name="Perna N.T."/>
            <person name="Payne S.M."/>
            <person name="Runyen-Janecky L.J."/>
            <person name="Zhou S."/>
            <person name="Schwartz D.C."/>
            <person name="Blattner F.R."/>
        </authorList>
    </citation>
    <scope>NUCLEOTIDE SEQUENCE [LARGE SCALE GENOMIC DNA]</scope>
    <source>
        <strain>ATCC 700930 / 2457T / Serotype 2a</strain>
    </source>
</reference>
<keyword id="KW-0029">Amino-acid transport</keyword>
<keyword id="KW-0997">Cell inner membrane</keyword>
<keyword id="KW-1003">Cell membrane</keyword>
<keyword id="KW-0472">Membrane</keyword>
<keyword id="KW-1185">Reference proteome</keyword>
<keyword id="KW-0812">Transmembrane</keyword>
<keyword id="KW-1133">Transmembrane helix</keyword>
<keyword id="KW-0813">Transport</keyword>